<protein>
    <recommendedName>
        <fullName evidence="1">Large ribosomal subunit protein bL20</fullName>
    </recommendedName>
    <alternativeName>
        <fullName evidence="2">50S ribosomal protein L20</fullName>
    </alternativeName>
</protein>
<proteinExistence type="inferred from homology"/>
<keyword id="KW-0687">Ribonucleoprotein</keyword>
<keyword id="KW-0689">Ribosomal protein</keyword>
<keyword id="KW-0694">RNA-binding</keyword>
<keyword id="KW-0699">rRNA-binding</keyword>
<organism>
    <name type="scientific">Geobacillus thermodenitrificans (strain NG80-2)</name>
    <dbReference type="NCBI Taxonomy" id="420246"/>
    <lineage>
        <taxon>Bacteria</taxon>
        <taxon>Bacillati</taxon>
        <taxon>Bacillota</taxon>
        <taxon>Bacilli</taxon>
        <taxon>Bacillales</taxon>
        <taxon>Anoxybacillaceae</taxon>
        <taxon>Geobacillus</taxon>
    </lineage>
</organism>
<reference key="1">
    <citation type="journal article" date="2007" name="Proc. Natl. Acad. Sci. U.S.A.">
        <title>Genome and proteome of long-chain alkane degrading Geobacillus thermodenitrificans NG80-2 isolated from a deep-subsurface oil reservoir.</title>
        <authorList>
            <person name="Feng L."/>
            <person name="Wang W."/>
            <person name="Cheng J."/>
            <person name="Ren Y."/>
            <person name="Zhao G."/>
            <person name="Gao C."/>
            <person name="Tang Y."/>
            <person name="Liu X."/>
            <person name="Han W."/>
            <person name="Peng X."/>
            <person name="Liu R."/>
            <person name="Wang L."/>
        </authorList>
    </citation>
    <scope>NUCLEOTIDE SEQUENCE [LARGE SCALE GENOMIC DNA]</scope>
    <source>
        <strain>NG80-2</strain>
    </source>
</reference>
<accession>A4IRN1</accession>
<name>RL20_GEOTN</name>
<feature type="chain" id="PRO_1000048984" description="Large ribosomal subunit protein bL20">
    <location>
        <begin position="1"/>
        <end position="119"/>
    </location>
</feature>
<evidence type="ECO:0000255" key="1">
    <source>
        <dbReference type="HAMAP-Rule" id="MF_00382"/>
    </source>
</evidence>
<evidence type="ECO:0000305" key="2"/>
<gene>
    <name evidence="1" type="primary">rplT</name>
    <name type="ordered locus">GTNG_2640</name>
</gene>
<sequence length="119" mass="13668">MPRVKGGPVTRRRRKKVLKLAKGYFGAKHALYRVANQQVMKSLMYAYRDRRQRKRDFRKLWIARINAAARQNGLSYSRLMHGLKLAGVEVNRKMLADLAVNDQAAFAQLADLAKANLNK</sequence>
<comment type="function">
    <text evidence="1">Binds directly to 23S ribosomal RNA and is necessary for the in vitro assembly process of the 50S ribosomal subunit. It is not involved in the protein synthesizing functions of that subunit.</text>
</comment>
<comment type="similarity">
    <text evidence="1">Belongs to the bacterial ribosomal protein bL20 family.</text>
</comment>
<dbReference type="EMBL" id="CP000557">
    <property type="protein sequence ID" value="ABO67985.1"/>
    <property type="molecule type" value="Genomic_DNA"/>
</dbReference>
<dbReference type="RefSeq" id="WP_011887944.1">
    <property type="nucleotide sequence ID" value="NC_009328.1"/>
</dbReference>
<dbReference type="SMR" id="A4IRN1"/>
<dbReference type="GeneID" id="87623215"/>
<dbReference type="KEGG" id="gtn:GTNG_2640"/>
<dbReference type="eggNOG" id="COG0292">
    <property type="taxonomic scope" value="Bacteria"/>
</dbReference>
<dbReference type="HOGENOM" id="CLU_123265_0_1_9"/>
<dbReference type="Proteomes" id="UP000001578">
    <property type="component" value="Chromosome"/>
</dbReference>
<dbReference type="GO" id="GO:1990904">
    <property type="term" value="C:ribonucleoprotein complex"/>
    <property type="evidence" value="ECO:0007669"/>
    <property type="project" value="UniProtKB-KW"/>
</dbReference>
<dbReference type="GO" id="GO:0005840">
    <property type="term" value="C:ribosome"/>
    <property type="evidence" value="ECO:0007669"/>
    <property type="project" value="UniProtKB-KW"/>
</dbReference>
<dbReference type="GO" id="GO:0019843">
    <property type="term" value="F:rRNA binding"/>
    <property type="evidence" value="ECO:0007669"/>
    <property type="project" value="UniProtKB-UniRule"/>
</dbReference>
<dbReference type="GO" id="GO:0003735">
    <property type="term" value="F:structural constituent of ribosome"/>
    <property type="evidence" value="ECO:0007669"/>
    <property type="project" value="InterPro"/>
</dbReference>
<dbReference type="GO" id="GO:0000027">
    <property type="term" value="P:ribosomal large subunit assembly"/>
    <property type="evidence" value="ECO:0007669"/>
    <property type="project" value="UniProtKB-UniRule"/>
</dbReference>
<dbReference type="GO" id="GO:0006412">
    <property type="term" value="P:translation"/>
    <property type="evidence" value="ECO:0007669"/>
    <property type="project" value="InterPro"/>
</dbReference>
<dbReference type="CDD" id="cd07026">
    <property type="entry name" value="Ribosomal_L20"/>
    <property type="match status" value="1"/>
</dbReference>
<dbReference type="FunFam" id="1.10.1900.20:FF:000001">
    <property type="entry name" value="50S ribosomal protein L20"/>
    <property type="match status" value="1"/>
</dbReference>
<dbReference type="Gene3D" id="6.10.160.10">
    <property type="match status" value="1"/>
</dbReference>
<dbReference type="Gene3D" id="1.10.1900.20">
    <property type="entry name" value="Ribosomal protein L20"/>
    <property type="match status" value="1"/>
</dbReference>
<dbReference type="HAMAP" id="MF_00382">
    <property type="entry name" value="Ribosomal_bL20"/>
    <property type="match status" value="1"/>
</dbReference>
<dbReference type="InterPro" id="IPR005813">
    <property type="entry name" value="Ribosomal_bL20"/>
</dbReference>
<dbReference type="InterPro" id="IPR049946">
    <property type="entry name" value="RIBOSOMAL_L20_CS"/>
</dbReference>
<dbReference type="InterPro" id="IPR035566">
    <property type="entry name" value="Ribosomal_protein_bL20_C"/>
</dbReference>
<dbReference type="NCBIfam" id="TIGR01032">
    <property type="entry name" value="rplT_bact"/>
    <property type="match status" value="1"/>
</dbReference>
<dbReference type="PANTHER" id="PTHR10986">
    <property type="entry name" value="39S RIBOSOMAL PROTEIN L20"/>
    <property type="match status" value="1"/>
</dbReference>
<dbReference type="Pfam" id="PF00453">
    <property type="entry name" value="Ribosomal_L20"/>
    <property type="match status" value="1"/>
</dbReference>
<dbReference type="PRINTS" id="PR00062">
    <property type="entry name" value="RIBOSOMALL20"/>
</dbReference>
<dbReference type="SUPFAM" id="SSF74731">
    <property type="entry name" value="Ribosomal protein L20"/>
    <property type="match status" value="1"/>
</dbReference>
<dbReference type="PROSITE" id="PS00937">
    <property type="entry name" value="RIBOSOMAL_L20"/>
    <property type="match status" value="1"/>
</dbReference>